<dbReference type="EMBL" id="AP006840">
    <property type="protein sequence ID" value="BAD40628.1"/>
    <property type="molecule type" value="Genomic_DNA"/>
</dbReference>
<dbReference type="RefSeq" id="WP_011195772.1">
    <property type="nucleotide sequence ID" value="NC_006177.1"/>
</dbReference>
<dbReference type="SMR" id="Q67NW5"/>
<dbReference type="STRING" id="292459.STH1643"/>
<dbReference type="KEGG" id="sth:STH1643"/>
<dbReference type="eggNOG" id="COG1058">
    <property type="taxonomic scope" value="Bacteria"/>
</dbReference>
<dbReference type="eggNOG" id="COG1546">
    <property type="taxonomic scope" value="Bacteria"/>
</dbReference>
<dbReference type="HOGENOM" id="CLU_030805_9_3_9"/>
<dbReference type="OrthoDB" id="9801454at2"/>
<dbReference type="Proteomes" id="UP000000417">
    <property type="component" value="Chromosome"/>
</dbReference>
<dbReference type="CDD" id="cd00885">
    <property type="entry name" value="cinA"/>
    <property type="match status" value="1"/>
</dbReference>
<dbReference type="Gene3D" id="3.30.70.2860">
    <property type="match status" value="1"/>
</dbReference>
<dbReference type="Gene3D" id="3.90.950.20">
    <property type="entry name" value="CinA-like"/>
    <property type="match status" value="1"/>
</dbReference>
<dbReference type="Gene3D" id="3.40.980.10">
    <property type="entry name" value="MoaB/Mog-like domain"/>
    <property type="match status" value="1"/>
</dbReference>
<dbReference type="HAMAP" id="MF_00226_B">
    <property type="entry name" value="CinA_B"/>
    <property type="match status" value="1"/>
</dbReference>
<dbReference type="InterPro" id="IPR050101">
    <property type="entry name" value="CinA"/>
</dbReference>
<dbReference type="InterPro" id="IPR036653">
    <property type="entry name" value="CinA-like_C"/>
</dbReference>
<dbReference type="InterPro" id="IPR008136">
    <property type="entry name" value="CinA_C"/>
</dbReference>
<dbReference type="InterPro" id="IPR041424">
    <property type="entry name" value="CinA_KH"/>
</dbReference>
<dbReference type="InterPro" id="IPR008135">
    <property type="entry name" value="Competence-induced_CinA"/>
</dbReference>
<dbReference type="InterPro" id="IPR036425">
    <property type="entry name" value="MoaB/Mog-like_dom_sf"/>
</dbReference>
<dbReference type="InterPro" id="IPR001453">
    <property type="entry name" value="MoaB/Mog_dom"/>
</dbReference>
<dbReference type="NCBIfam" id="TIGR00200">
    <property type="entry name" value="cinA_nterm"/>
    <property type="match status" value="1"/>
</dbReference>
<dbReference type="NCBIfam" id="TIGR00177">
    <property type="entry name" value="molyb_syn"/>
    <property type="match status" value="1"/>
</dbReference>
<dbReference type="NCBIfam" id="TIGR00199">
    <property type="entry name" value="PncC_domain"/>
    <property type="match status" value="1"/>
</dbReference>
<dbReference type="NCBIfam" id="NF001813">
    <property type="entry name" value="PRK00549.1"/>
    <property type="match status" value="1"/>
</dbReference>
<dbReference type="PANTHER" id="PTHR13939">
    <property type="entry name" value="NICOTINAMIDE-NUCLEOTIDE AMIDOHYDROLASE PNCC"/>
    <property type="match status" value="1"/>
</dbReference>
<dbReference type="PANTHER" id="PTHR13939:SF0">
    <property type="entry name" value="NMN AMIDOHYDROLASE-LIKE PROTEIN YFAY"/>
    <property type="match status" value="1"/>
</dbReference>
<dbReference type="Pfam" id="PF02464">
    <property type="entry name" value="CinA"/>
    <property type="match status" value="1"/>
</dbReference>
<dbReference type="Pfam" id="PF18146">
    <property type="entry name" value="CinA_KH"/>
    <property type="match status" value="1"/>
</dbReference>
<dbReference type="Pfam" id="PF00994">
    <property type="entry name" value="MoCF_biosynth"/>
    <property type="match status" value="1"/>
</dbReference>
<dbReference type="PIRSF" id="PIRSF006728">
    <property type="entry name" value="CinA"/>
    <property type="match status" value="1"/>
</dbReference>
<dbReference type="SMART" id="SM00852">
    <property type="entry name" value="MoCF_biosynth"/>
    <property type="match status" value="1"/>
</dbReference>
<dbReference type="SUPFAM" id="SSF142433">
    <property type="entry name" value="CinA-like"/>
    <property type="match status" value="1"/>
</dbReference>
<dbReference type="SUPFAM" id="SSF53218">
    <property type="entry name" value="Molybdenum cofactor biosynthesis proteins"/>
    <property type="match status" value="1"/>
</dbReference>
<sequence>MIAELVFVGTELLLGEILNTNAQYLSRQLAQLGVDVYHQVVVGDNAARLRAVLSQALSRSDLVIASGGLGPTDDDITREVAAEVTGRPLELDPQLLAQLEIWFARRGRRMAENNRRQCMVPRGARVLPNDRGTAPGLMIPADGDKVVILLPGPPGELRPMFEAHVAPYLAARSGGRPLRLVTRTLRFVGIGESALADGLRDLMATQTDPTIAPYAKVAEVHLRLATRAADEAEGYARIAPLEAEIRSRFGRFLYGSDEETLPQAVGRLLAERGMTLSTAESCTGGLVAKWITDVPGSSRYFGTGFVTYANEAKVSLLGVPEELLSAHGAVSEPVARAMAEGALQRSGADVAVAVSGIAGPDGGTPEKPVGTVCFALAGRGRQGGGPLPAGTWAETLWLHGDRDGVRERAAVHALAMVRRYLLGYLD</sequence>
<feature type="chain" id="PRO_0000156781" description="Putative competence-damage inducible protein">
    <location>
        <begin position="1"/>
        <end position="426"/>
    </location>
</feature>
<reference key="1">
    <citation type="journal article" date="2004" name="Nucleic Acids Res.">
        <title>Genome sequence of Symbiobacterium thermophilum, an uncultivable bacterium that depends on microbial commensalism.</title>
        <authorList>
            <person name="Ueda K."/>
            <person name="Yamashita A."/>
            <person name="Ishikawa J."/>
            <person name="Shimada M."/>
            <person name="Watsuji T."/>
            <person name="Morimura K."/>
            <person name="Ikeda H."/>
            <person name="Hattori M."/>
            <person name="Beppu T."/>
        </authorList>
    </citation>
    <scope>NUCLEOTIDE SEQUENCE [LARGE SCALE GENOMIC DNA]</scope>
    <source>
        <strain>DSM 24528 / JCM 14929 / IAM 14863 / T</strain>
    </source>
</reference>
<organism>
    <name type="scientific">Symbiobacterium thermophilum (strain DSM 24528 / JCM 14929 / IAM 14863 / T)</name>
    <dbReference type="NCBI Taxonomy" id="292459"/>
    <lineage>
        <taxon>Bacteria</taxon>
        <taxon>Bacillati</taxon>
        <taxon>Bacillota</taxon>
        <taxon>Clostridia</taxon>
        <taxon>Eubacteriales</taxon>
        <taxon>Symbiobacteriaceae</taxon>
        <taxon>Symbiobacterium</taxon>
    </lineage>
</organism>
<comment type="similarity">
    <text evidence="1">Belongs to the CinA family.</text>
</comment>
<proteinExistence type="inferred from homology"/>
<gene>
    <name evidence="1" type="primary">cinA</name>
    <name type="ordered locus">STH1643</name>
</gene>
<evidence type="ECO:0000255" key="1">
    <source>
        <dbReference type="HAMAP-Rule" id="MF_00226"/>
    </source>
</evidence>
<protein>
    <recommendedName>
        <fullName evidence="1">Putative competence-damage inducible protein</fullName>
    </recommendedName>
</protein>
<keyword id="KW-1185">Reference proteome</keyword>
<name>CINA_SYMTH</name>
<accession>Q67NW5</accession>